<name>ACPS_SALDC</name>
<organism>
    <name type="scientific">Salmonella dublin (strain CT_02021853)</name>
    <dbReference type="NCBI Taxonomy" id="439851"/>
    <lineage>
        <taxon>Bacteria</taxon>
        <taxon>Pseudomonadati</taxon>
        <taxon>Pseudomonadota</taxon>
        <taxon>Gammaproteobacteria</taxon>
        <taxon>Enterobacterales</taxon>
        <taxon>Enterobacteriaceae</taxon>
        <taxon>Salmonella</taxon>
    </lineage>
</organism>
<feature type="chain" id="PRO_1000093911" description="Holo-[acyl-carrier-protein] synthase">
    <location>
        <begin position="1"/>
        <end position="126"/>
    </location>
</feature>
<feature type="binding site" evidence="1">
    <location>
        <position position="9"/>
    </location>
    <ligand>
        <name>Mg(2+)</name>
        <dbReference type="ChEBI" id="CHEBI:18420"/>
    </ligand>
</feature>
<feature type="binding site" evidence="1">
    <location>
        <position position="58"/>
    </location>
    <ligand>
        <name>Mg(2+)</name>
        <dbReference type="ChEBI" id="CHEBI:18420"/>
    </ligand>
</feature>
<gene>
    <name evidence="1" type="primary">acpS</name>
    <name type="ordered locus">SeD_A2955</name>
</gene>
<reference key="1">
    <citation type="journal article" date="2011" name="J. Bacteriol.">
        <title>Comparative genomics of 28 Salmonella enterica isolates: evidence for CRISPR-mediated adaptive sublineage evolution.</title>
        <authorList>
            <person name="Fricke W.F."/>
            <person name="Mammel M.K."/>
            <person name="McDermott P.F."/>
            <person name="Tartera C."/>
            <person name="White D.G."/>
            <person name="Leclerc J.E."/>
            <person name="Ravel J."/>
            <person name="Cebula T.A."/>
        </authorList>
    </citation>
    <scope>NUCLEOTIDE SEQUENCE [LARGE SCALE GENOMIC DNA]</scope>
    <source>
        <strain>CT_02021853</strain>
    </source>
</reference>
<proteinExistence type="inferred from homology"/>
<sequence length="126" mass="14070">MAILGLGTDIVEIARIEAVISRSGERLARRVLSDNEWAIWETHQQPVRFLAKRFAVKEAAAKAFGTGIRNGLAFNQFEVFNDELGKPRLRLWGEALTLAEKLGVAHMHVTLADERHYACATVILES</sequence>
<evidence type="ECO:0000255" key="1">
    <source>
        <dbReference type="HAMAP-Rule" id="MF_00101"/>
    </source>
</evidence>
<comment type="function">
    <text evidence="1">Transfers the 4'-phosphopantetheine moiety from coenzyme A to a Ser of acyl-carrier-protein.</text>
</comment>
<comment type="catalytic activity">
    <reaction evidence="1">
        <text>apo-[ACP] + CoA = holo-[ACP] + adenosine 3',5'-bisphosphate + H(+)</text>
        <dbReference type="Rhea" id="RHEA:12068"/>
        <dbReference type="Rhea" id="RHEA-COMP:9685"/>
        <dbReference type="Rhea" id="RHEA-COMP:9690"/>
        <dbReference type="ChEBI" id="CHEBI:15378"/>
        <dbReference type="ChEBI" id="CHEBI:29999"/>
        <dbReference type="ChEBI" id="CHEBI:57287"/>
        <dbReference type="ChEBI" id="CHEBI:58343"/>
        <dbReference type="ChEBI" id="CHEBI:64479"/>
        <dbReference type="EC" id="2.7.8.7"/>
    </reaction>
</comment>
<comment type="cofactor">
    <cofactor evidence="1">
        <name>Mg(2+)</name>
        <dbReference type="ChEBI" id="CHEBI:18420"/>
    </cofactor>
</comment>
<comment type="subcellular location">
    <subcellularLocation>
        <location evidence="1">Cytoplasm</location>
    </subcellularLocation>
</comment>
<comment type="similarity">
    <text evidence="1">Belongs to the P-Pant transferase superfamily. AcpS family.</text>
</comment>
<protein>
    <recommendedName>
        <fullName evidence="1">Holo-[acyl-carrier-protein] synthase</fullName>
        <shortName evidence="1">Holo-ACP synthase</shortName>
        <ecNumber evidence="1">2.7.8.7</ecNumber>
    </recommendedName>
    <alternativeName>
        <fullName evidence="1">4'-phosphopantetheinyl transferase AcpS</fullName>
    </alternativeName>
</protein>
<dbReference type="EC" id="2.7.8.7" evidence="1"/>
<dbReference type="EMBL" id="CP001144">
    <property type="protein sequence ID" value="ACH73611.1"/>
    <property type="molecule type" value="Genomic_DNA"/>
</dbReference>
<dbReference type="RefSeq" id="WP_000986043.1">
    <property type="nucleotide sequence ID" value="NC_011205.1"/>
</dbReference>
<dbReference type="SMR" id="B5FRC1"/>
<dbReference type="GeneID" id="66757004"/>
<dbReference type="KEGG" id="sed:SeD_A2955"/>
<dbReference type="HOGENOM" id="CLU_089696_3_1_6"/>
<dbReference type="Proteomes" id="UP000008322">
    <property type="component" value="Chromosome"/>
</dbReference>
<dbReference type="GO" id="GO:0005737">
    <property type="term" value="C:cytoplasm"/>
    <property type="evidence" value="ECO:0007669"/>
    <property type="project" value="UniProtKB-SubCell"/>
</dbReference>
<dbReference type="GO" id="GO:0008897">
    <property type="term" value="F:holo-[acyl-carrier-protein] synthase activity"/>
    <property type="evidence" value="ECO:0007669"/>
    <property type="project" value="UniProtKB-UniRule"/>
</dbReference>
<dbReference type="GO" id="GO:0000287">
    <property type="term" value="F:magnesium ion binding"/>
    <property type="evidence" value="ECO:0007669"/>
    <property type="project" value="UniProtKB-UniRule"/>
</dbReference>
<dbReference type="GO" id="GO:0006633">
    <property type="term" value="P:fatty acid biosynthetic process"/>
    <property type="evidence" value="ECO:0007669"/>
    <property type="project" value="UniProtKB-UniRule"/>
</dbReference>
<dbReference type="FunFam" id="3.90.470.20:FF:000001">
    <property type="entry name" value="Holo-[acyl-carrier-protein] synthase"/>
    <property type="match status" value="1"/>
</dbReference>
<dbReference type="Gene3D" id="3.90.470.20">
    <property type="entry name" value="4'-phosphopantetheinyl transferase domain"/>
    <property type="match status" value="1"/>
</dbReference>
<dbReference type="HAMAP" id="MF_00101">
    <property type="entry name" value="AcpS"/>
    <property type="match status" value="1"/>
</dbReference>
<dbReference type="InterPro" id="IPR008278">
    <property type="entry name" value="4-PPantetheinyl_Trfase_dom"/>
</dbReference>
<dbReference type="InterPro" id="IPR037143">
    <property type="entry name" value="4-PPantetheinyl_Trfase_dom_sf"/>
</dbReference>
<dbReference type="InterPro" id="IPR002582">
    <property type="entry name" value="ACPS"/>
</dbReference>
<dbReference type="InterPro" id="IPR004568">
    <property type="entry name" value="Ppantetheine-prot_Trfase_dom"/>
</dbReference>
<dbReference type="NCBIfam" id="TIGR00516">
    <property type="entry name" value="acpS"/>
    <property type="match status" value="1"/>
</dbReference>
<dbReference type="NCBIfam" id="TIGR00556">
    <property type="entry name" value="pantethn_trn"/>
    <property type="match status" value="1"/>
</dbReference>
<dbReference type="Pfam" id="PF01648">
    <property type="entry name" value="ACPS"/>
    <property type="match status" value="1"/>
</dbReference>
<dbReference type="SUPFAM" id="SSF56214">
    <property type="entry name" value="4'-phosphopantetheinyl transferase"/>
    <property type="match status" value="1"/>
</dbReference>
<keyword id="KW-0963">Cytoplasm</keyword>
<keyword id="KW-0275">Fatty acid biosynthesis</keyword>
<keyword id="KW-0276">Fatty acid metabolism</keyword>
<keyword id="KW-0444">Lipid biosynthesis</keyword>
<keyword id="KW-0443">Lipid metabolism</keyword>
<keyword id="KW-0460">Magnesium</keyword>
<keyword id="KW-0479">Metal-binding</keyword>
<keyword id="KW-0808">Transferase</keyword>
<accession>B5FRC1</accession>